<feature type="chain" id="PRO_1000088412" description="Pyridoxal 5'-phosphate synthase subunit PdxS">
    <location>
        <begin position="1"/>
        <end position="295"/>
    </location>
</feature>
<feature type="active site" description="Schiff-base intermediate with D-ribose 5-phosphate" evidence="1">
    <location>
        <position position="82"/>
    </location>
</feature>
<feature type="binding site" evidence="1">
    <location>
        <position position="25"/>
    </location>
    <ligand>
        <name>D-ribose 5-phosphate</name>
        <dbReference type="ChEBI" id="CHEBI:78346"/>
    </ligand>
</feature>
<feature type="binding site" evidence="1">
    <location>
        <position position="154"/>
    </location>
    <ligand>
        <name>D-ribose 5-phosphate</name>
        <dbReference type="ChEBI" id="CHEBI:78346"/>
    </ligand>
</feature>
<feature type="binding site" evidence="1">
    <location>
        <position position="166"/>
    </location>
    <ligand>
        <name>D-glyceraldehyde 3-phosphate</name>
        <dbReference type="ChEBI" id="CHEBI:59776"/>
    </ligand>
</feature>
<feature type="binding site" evidence="1">
    <location>
        <position position="215"/>
    </location>
    <ligand>
        <name>D-ribose 5-phosphate</name>
        <dbReference type="ChEBI" id="CHEBI:78346"/>
    </ligand>
</feature>
<feature type="binding site" evidence="1">
    <location>
        <begin position="236"/>
        <end position="237"/>
    </location>
    <ligand>
        <name>D-ribose 5-phosphate</name>
        <dbReference type="ChEBI" id="CHEBI:78346"/>
    </ligand>
</feature>
<organism>
    <name type="scientific">Staphylococcus aureus (strain JH9)</name>
    <dbReference type="NCBI Taxonomy" id="359786"/>
    <lineage>
        <taxon>Bacteria</taxon>
        <taxon>Bacillati</taxon>
        <taxon>Bacillota</taxon>
        <taxon>Bacilli</taxon>
        <taxon>Bacillales</taxon>
        <taxon>Staphylococcaceae</taxon>
        <taxon>Staphylococcus</taxon>
    </lineage>
</organism>
<gene>
    <name evidence="1" type="primary">pdxS</name>
    <name type="ordered locus">SaurJH9_0541</name>
</gene>
<sequence>MSKIIGSDRVKRGMAEMQKGGVIMDVVNAEQARIAEEAGAVAVMALERVPSDIRAAGGVARMANPKIVEEVMNAVSIPVMAKARIGHITEARVLEAMGVDYIDESEVLTPADEEYHLRKDQFTVPFVCGCRNLGEAARRIGEGAAMLRTKGEPGTGNIVEAVRHMRQVNSEVSRLTVMNDDEIMTFAKDIGAPYEILKQIKDNGRLPVVNFAAGGVATPQDAALMMELGADGVFVGSGIFKSEDPEKFAKAIVQATTHYQDYELIGRLASELGTAMKGLDINQLSLEERMQERGW</sequence>
<evidence type="ECO:0000255" key="1">
    <source>
        <dbReference type="HAMAP-Rule" id="MF_01824"/>
    </source>
</evidence>
<name>PDXS_STAA9</name>
<accession>A5IQ72</accession>
<protein>
    <recommendedName>
        <fullName evidence="1">Pyridoxal 5'-phosphate synthase subunit PdxS</fullName>
        <shortName evidence="1">PLP synthase subunit PdxS</shortName>
        <ecNumber evidence="1">4.3.3.6</ecNumber>
    </recommendedName>
    <alternativeName>
        <fullName evidence="1">Pdx1</fullName>
    </alternativeName>
</protein>
<keyword id="KW-0456">Lyase</keyword>
<keyword id="KW-0663">Pyridoxal phosphate</keyword>
<keyword id="KW-0704">Schiff base</keyword>
<comment type="function">
    <text evidence="1">Catalyzes the formation of pyridoxal 5'-phosphate from ribose 5-phosphate (RBP), glyceraldehyde 3-phosphate (G3P) and ammonia. The ammonia is provided by the PdxT subunit. Can also use ribulose 5-phosphate and dihydroxyacetone phosphate as substrates, resulting from enzyme-catalyzed isomerization of RBP and G3P, respectively.</text>
</comment>
<comment type="catalytic activity">
    <reaction evidence="1">
        <text>aldehydo-D-ribose 5-phosphate + D-glyceraldehyde 3-phosphate + L-glutamine = pyridoxal 5'-phosphate + L-glutamate + phosphate + 3 H2O + H(+)</text>
        <dbReference type="Rhea" id="RHEA:31507"/>
        <dbReference type="ChEBI" id="CHEBI:15377"/>
        <dbReference type="ChEBI" id="CHEBI:15378"/>
        <dbReference type="ChEBI" id="CHEBI:29985"/>
        <dbReference type="ChEBI" id="CHEBI:43474"/>
        <dbReference type="ChEBI" id="CHEBI:58273"/>
        <dbReference type="ChEBI" id="CHEBI:58359"/>
        <dbReference type="ChEBI" id="CHEBI:59776"/>
        <dbReference type="ChEBI" id="CHEBI:597326"/>
        <dbReference type="EC" id="4.3.3.6"/>
    </reaction>
</comment>
<comment type="pathway">
    <text evidence="1">Cofactor biosynthesis; pyridoxal 5'-phosphate biosynthesis.</text>
</comment>
<comment type="subunit">
    <text evidence="1">In the presence of PdxT, forms a dodecamer of heterodimers.</text>
</comment>
<comment type="similarity">
    <text evidence="1">Belongs to the PdxS/SNZ family.</text>
</comment>
<reference key="1">
    <citation type="submission" date="2007-05" db="EMBL/GenBank/DDBJ databases">
        <title>Complete sequence of chromosome of Staphylococcus aureus subsp. aureus JH9.</title>
        <authorList>
            <consortium name="US DOE Joint Genome Institute"/>
            <person name="Copeland A."/>
            <person name="Lucas S."/>
            <person name="Lapidus A."/>
            <person name="Barry K."/>
            <person name="Detter J.C."/>
            <person name="Glavina del Rio T."/>
            <person name="Hammon N."/>
            <person name="Israni S."/>
            <person name="Pitluck S."/>
            <person name="Chain P."/>
            <person name="Malfatti S."/>
            <person name="Shin M."/>
            <person name="Vergez L."/>
            <person name="Schmutz J."/>
            <person name="Larimer F."/>
            <person name="Land M."/>
            <person name="Hauser L."/>
            <person name="Kyrpides N."/>
            <person name="Kim E."/>
            <person name="Tomasz A."/>
            <person name="Richardson P."/>
        </authorList>
    </citation>
    <scope>NUCLEOTIDE SEQUENCE [LARGE SCALE GENOMIC DNA]</scope>
    <source>
        <strain>JH9</strain>
    </source>
</reference>
<dbReference type="EC" id="4.3.3.6" evidence="1"/>
<dbReference type="EMBL" id="CP000703">
    <property type="protein sequence ID" value="ABQ48345.1"/>
    <property type="molecule type" value="Genomic_DNA"/>
</dbReference>
<dbReference type="RefSeq" id="WP_000034728.1">
    <property type="nucleotide sequence ID" value="NC_009487.1"/>
</dbReference>
<dbReference type="SMR" id="A5IQ72"/>
<dbReference type="GeneID" id="66838811"/>
<dbReference type="KEGG" id="saj:SaurJH9_0541"/>
<dbReference type="HOGENOM" id="CLU_055352_1_0_9"/>
<dbReference type="UniPathway" id="UPA00245"/>
<dbReference type="GO" id="GO:0036381">
    <property type="term" value="F:pyridoxal 5'-phosphate synthase (glutamine hydrolysing) activity"/>
    <property type="evidence" value="ECO:0007669"/>
    <property type="project" value="UniProtKB-UniRule"/>
</dbReference>
<dbReference type="GO" id="GO:0006520">
    <property type="term" value="P:amino acid metabolic process"/>
    <property type="evidence" value="ECO:0007669"/>
    <property type="project" value="TreeGrafter"/>
</dbReference>
<dbReference type="GO" id="GO:0042823">
    <property type="term" value="P:pyridoxal phosphate biosynthetic process"/>
    <property type="evidence" value="ECO:0007669"/>
    <property type="project" value="UniProtKB-UniRule"/>
</dbReference>
<dbReference type="GO" id="GO:0008615">
    <property type="term" value="P:pyridoxine biosynthetic process"/>
    <property type="evidence" value="ECO:0007669"/>
    <property type="project" value="TreeGrafter"/>
</dbReference>
<dbReference type="CDD" id="cd04727">
    <property type="entry name" value="pdxS"/>
    <property type="match status" value="1"/>
</dbReference>
<dbReference type="FunFam" id="3.20.20.70:FF:000001">
    <property type="entry name" value="Pyridoxine biosynthesis protein PDX1"/>
    <property type="match status" value="1"/>
</dbReference>
<dbReference type="Gene3D" id="3.20.20.70">
    <property type="entry name" value="Aldolase class I"/>
    <property type="match status" value="1"/>
</dbReference>
<dbReference type="HAMAP" id="MF_01824">
    <property type="entry name" value="PdxS"/>
    <property type="match status" value="1"/>
</dbReference>
<dbReference type="InterPro" id="IPR013785">
    <property type="entry name" value="Aldolase_TIM"/>
</dbReference>
<dbReference type="InterPro" id="IPR001852">
    <property type="entry name" value="PdxS/SNZ"/>
</dbReference>
<dbReference type="InterPro" id="IPR033755">
    <property type="entry name" value="PdxS/SNZ_N"/>
</dbReference>
<dbReference type="InterPro" id="IPR011060">
    <property type="entry name" value="RibuloseP-bd_barrel"/>
</dbReference>
<dbReference type="NCBIfam" id="NF003215">
    <property type="entry name" value="PRK04180.1"/>
    <property type="match status" value="1"/>
</dbReference>
<dbReference type="NCBIfam" id="TIGR00343">
    <property type="entry name" value="pyridoxal 5'-phosphate synthase lyase subunit PdxS"/>
    <property type="match status" value="1"/>
</dbReference>
<dbReference type="PANTHER" id="PTHR31829">
    <property type="entry name" value="PYRIDOXAL 5'-PHOSPHATE SYNTHASE SUBUNIT SNZ1-RELATED"/>
    <property type="match status" value="1"/>
</dbReference>
<dbReference type="PANTHER" id="PTHR31829:SF0">
    <property type="entry name" value="PYRIDOXAL 5'-PHOSPHATE SYNTHASE SUBUNIT SNZ1-RELATED"/>
    <property type="match status" value="1"/>
</dbReference>
<dbReference type="Pfam" id="PF01680">
    <property type="entry name" value="SOR_SNZ"/>
    <property type="match status" value="1"/>
</dbReference>
<dbReference type="PIRSF" id="PIRSF029271">
    <property type="entry name" value="Pdx1"/>
    <property type="match status" value="1"/>
</dbReference>
<dbReference type="SUPFAM" id="SSF51366">
    <property type="entry name" value="Ribulose-phoshate binding barrel"/>
    <property type="match status" value="1"/>
</dbReference>
<dbReference type="PROSITE" id="PS01235">
    <property type="entry name" value="PDXS_SNZ_1"/>
    <property type="match status" value="1"/>
</dbReference>
<dbReference type="PROSITE" id="PS51129">
    <property type="entry name" value="PDXS_SNZ_2"/>
    <property type="match status" value="1"/>
</dbReference>
<proteinExistence type="inferred from homology"/>